<dbReference type="EC" id="2.1.1.174" evidence="1"/>
<dbReference type="EMBL" id="CP001144">
    <property type="protein sequence ID" value="ACH76563.1"/>
    <property type="molecule type" value="Genomic_DNA"/>
</dbReference>
<dbReference type="RefSeq" id="WP_000019988.1">
    <property type="nucleotide sequence ID" value="NC_011205.1"/>
</dbReference>
<dbReference type="SMR" id="B5FHV5"/>
<dbReference type="KEGG" id="sed:SeD_A3577"/>
<dbReference type="HOGENOM" id="CLU_040288_4_0_6"/>
<dbReference type="Proteomes" id="UP000008322">
    <property type="component" value="Chromosome"/>
</dbReference>
<dbReference type="GO" id="GO:0005737">
    <property type="term" value="C:cytoplasm"/>
    <property type="evidence" value="ECO:0007669"/>
    <property type="project" value="UniProtKB-SubCell"/>
</dbReference>
<dbReference type="GO" id="GO:0052916">
    <property type="term" value="F:23S rRNA (guanine(1835)-N(2))-methyltransferase activity"/>
    <property type="evidence" value="ECO:0007669"/>
    <property type="project" value="UniProtKB-EC"/>
</dbReference>
<dbReference type="GO" id="GO:0003676">
    <property type="term" value="F:nucleic acid binding"/>
    <property type="evidence" value="ECO:0007669"/>
    <property type="project" value="InterPro"/>
</dbReference>
<dbReference type="CDD" id="cd02440">
    <property type="entry name" value="AdoMet_MTases"/>
    <property type="match status" value="1"/>
</dbReference>
<dbReference type="FunFam" id="3.40.50.150:FF:000046">
    <property type="entry name" value="Ribosomal RNA large subunit methyltransferase G"/>
    <property type="match status" value="1"/>
</dbReference>
<dbReference type="FunFam" id="3.40.50.150:FF:000047">
    <property type="entry name" value="Ribosomal RNA large subunit methyltransferase G"/>
    <property type="match status" value="1"/>
</dbReference>
<dbReference type="Gene3D" id="3.40.50.150">
    <property type="entry name" value="Vaccinia Virus protein VP39"/>
    <property type="match status" value="2"/>
</dbReference>
<dbReference type="HAMAP" id="MF_01859">
    <property type="entry name" value="23SrRNA_methyltr_G"/>
    <property type="match status" value="1"/>
</dbReference>
<dbReference type="InterPro" id="IPR002052">
    <property type="entry name" value="DNA_methylase_N6_adenine_CS"/>
</dbReference>
<dbReference type="InterPro" id="IPR017237">
    <property type="entry name" value="rRNA_m2G-MeTrfase_RlmG"/>
</dbReference>
<dbReference type="InterPro" id="IPR046977">
    <property type="entry name" value="RsmC/RlmG"/>
</dbReference>
<dbReference type="InterPro" id="IPR029063">
    <property type="entry name" value="SAM-dependent_MTases_sf"/>
</dbReference>
<dbReference type="InterPro" id="IPR007848">
    <property type="entry name" value="Small_mtfrase_dom"/>
</dbReference>
<dbReference type="NCBIfam" id="NF011577">
    <property type="entry name" value="PRK15001.1"/>
    <property type="match status" value="1"/>
</dbReference>
<dbReference type="PANTHER" id="PTHR47816:SF5">
    <property type="entry name" value="RIBOSOMAL RNA LARGE SUBUNIT METHYLTRANSFERASE G"/>
    <property type="match status" value="1"/>
</dbReference>
<dbReference type="PANTHER" id="PTHR47816">
    <property type="entry name" value="RIBOSOMAL RNA SMALL SUBUNIT METHYLTRANSFERASE C"/>
    <property type="match status" value="1"/>
</dbReference>
<dbReference type="Pfam" id="PF05175">
    <property type="entry name" value="MTS"/>
    <property type="match status" value="1"/>
</dbReference>
<dbReference type="PIRSF" id="PIRSF037565">
    <property type="entry name" value="RRNA_m2G_Mtase_RsmD_prd"/>
    <property type="match status" value="1"/>
</dbReference>
<dbReference type="SUPFAM" id="SSF53335">
    <property type="entry name" value="S-adenosyl-L-methionine-dependent methyltransferases"/>
    <property type="match status" value="1"/>
</dbReference>
<feature type="chain" id="PRO_0000366492" description="Ribosomal RNA large subunit methyltransferase G">
    <location>
        <begin position="1"/>
        <end position="378"/>
    </location>
</feature>
<proteinExistence type="inferred from homology"/>
<organism>
    <name type="scientific">Salmonella dublin (strain CT_02021853)</name>
    <dbReference type="NCBI Taxonomy" id="439851"/>
    <lineage>
        <taxon>Bacteria</taxon>
        <taxon>Pseudomonadati</taxon>
        <taxon>Pseudomonadota</taxon>
        <taxon>Gammaproteobacteria</taxon>
        <taxon>Enterobacterales</taxon>
        <taxon>Enterobacteriaceae</taxon>
        <taxon>Salmonella</taxon>
    </lineage>
</organism>
<reference key="1">
    <citation type="journal article" date="2011" name="J. Bacteriol.">
        <title>Comparative genomics of 28 Salmonella enterica isolates: evidence for CRISPR-mediated adaptive sublineage evolution.</title>
        <authorList>
            <person name="Fricke W.F."/>
            <person name="Mammel M.K."/>
            <person name="McDermott P.F."/>
            <person name="Tartera C."/>
            <person name="White D.G."/>
            <person name="Leclerc J.E."/>
            <person name="Ravel J."/>
            <person name="Cebula T.A."/>
        </authorList>
    </citation>
    <scope>NUCLEOTIDE SEQUENCE [LARGE SCALE GENOMIC DNA]</scope>
    <source>
        <strain>CT_02021853</strain>
    </source>
</reference>
<keyword id="KW-0963">Cytoplasm</keyword>
<keyword id="KW-0489">Methyltransferase</keyword>
<keyword id="KW-0698">rRNA processing</keyword>
<keyword id="KW-0949">S-adenosyl-L-methionine</keyword>
<keyword id="KW-0808">Transferase</keyword>
<evidence type="ECO:0000255" key="1">
    <source>
        <dbReference type="HAMAP-Rule" id="MF_01859"/>
    </source>
</evidence>
<accession>B5FHV5</accession>
<sequence>MSHVDDGFRSLTLKRFPQTDDVNPLLAWEAADEYLLQQLDETEIRGPVLILNDTFGALSCALAEHSPYSIGDSYLSELGTRENLRHNGIAESSVTFLDSTADYPQAPGVVLIKVPKTLALLEQQLRALRKVVTAQTRIIAGAKARDIHTSTLELFEKVLGPTTTTLAWKKARLINCTFSHPQLADAPQTLSWKLEDTGWTIHNHANVFSRTGLDIGARFFMQHLPENLDGEIVDLGCGNGVIGLSLLAKNPQANVVFVDESPMAVDSSRLNVETNLPEAFERCEFMINNALSGVEPFRFNAVFCNPPFHQKHALTDNIAWEMFHHARRCLKINGELYIVANRHLDYFHKLKKIFGNCATIATNNKFVILKAVKQGHRR</sequence>
<gene>
    <name evidence="1" type="primary">rlmG</name>
    <name type="ordered locus">SeD_A3577</name>
</gene>
<name>RLMG_SALDC</name>
<comment type="function">
    <text evidence="1">Specifically methylates the guanine in position 1835 (m2G1835) of 23S rRNA.</text>
</comment>
<comment type="catalytic activity">
    <reaction evidence="1">
        <text>guanosine(1835) in 23S rRNA + S-adenosyl-L-methionine = N(2)-methylguanosine(1835) in 23S rRNA + S-adenosyl-L-homocysteine + H(+)</text>
        <dbReference type="Rhea" id="RHEA:42744"/>
        <dbReference type="Rhea" id="RHEA-COMP:10217"/>
        <dbReference type="Rhea" id="RHEA-COMP:10218"/>
        <dbReference type="ChEBI" id="CHEBI:15378"/>
        <dbReference type="ChEBI" id="CHEBI:57856"/>
        <dbReference type="ChEBI" id="CHEBI:59789"/>
        <dbReference type="ChEBI" id="CHEBI:74269"/>
        <dbReference type="ChEBI" id="CHEBI:74481"/>
        <dbReference type="EC" id="2.1.1.174"/>
    </reaction>
</comment>
<comment type="subcellular location">
    <subcellularLocation>
        <location evidence="1">Cytoplasm</location>
    </subcellularLocation>
</comment>
<comment type="similarity">
    <text evidence="1">Belongs to the methyltransferase superfamily. RlmG family.</text>
</comment>
<protein>
    <recommendedName>
        <fullName evidence="1">Ribosomal RNA large subunit methyltransferase G</fullName>
        <ecNumber evidence="1">2.1.1.174</ecNumber>
    </recommendedName>
    <alternativeName>
        <fullName evidence="1">23S rRNA m2G1835 methyltransferase</fullName>
    </alternativeName>
    <alternativeName>
        <fullName evidence="1">rRNA (guanine-N(2)-)-methyltransferase RlmG</fullName>
    </alternativeName>
</protein>